<gene>
    <name evidence="1" type="primary">mnmA</name>
    <name type="ordered locus">SACE_6187</name>
</gene>
<sequence length="362" mass="38409">MRVLAAMSGGVDSAVAAARAVEAGHEVVGVHLALSAKPGTLRTGARGCCTIEDSHDARRAADILGIPFYVWDFAERFTEEVIETFVGEYAAGRTPNPCLTCNEKIKFEALLEKAMALGFDAVCTGHYARLTVEDGVPVLRRSRDEGKDQSYVLASLTAEQLGHSMFPLGDSLKSQVRQEAAERGLAVAKKPDSHDICFIPDGDTKKFLESKLGQKPGQLVDAETGAVLGEHTGVHGFTVGQRKGLGIDAPAPDGRPRYVLSLEPVSGTVKVGSADHLGVTEIDAKRPIWPSQRELDGPTECVVQVRAHGGTADAVAEVADGGMSIRLRRPLRGVAPGQAVVLYRPEEEGDLVLGSALIAATR</sequence>
<accession>A4FMT5</accession>
<protein>
    <recommendedName>
        <fullName evidence="1">tRNA-specific 2-thiouridylase MnmA</fullName>
        <ecNumber evidence="1">2.8.1.13</ecNumber>
    </recommendedName>
</protein>
<organism>
    <name type="scientific">Saccharopolyspora erythraea (strain ATCC 11635 / DSM 40517 / JCM 4748 / NBRC 13426 / NCIMB 8594 / NRRL 2338)</name>
    <dbReference type="NCBI Taxonomy" id="405948"/>
    <lineage>
        <taxon>Bacteria</taxon>
        <taxon>Bacillati</taxon>
        <taxon>Actinomycetota</taxon>
        <taxon>Actinomycetes</taxon>
        <taxon>Pseudonocardiales</taxon>
        <taxon>Pseudonocardiaceae</taxon>
        <taxon>Saccharopolyspora</taxon>
    </lineage>
</organism>
<name>MNMA_SACEN</name>
<keyword id="KW-0067">ATP-binding</keyword>
<keyword id="KW-0963">Cytoplasm</keyword>
<keyword id="KW-1015">Disulfide bond</keyword>
<keyword id="KW-0547">Nucleotide-binding</keyword>
<keyword id="KW-1185">Reference proteome</keyword>
<keyword id="KW-0694">RNA-binding</keyword>
<keyword id="KW-0808">Transferase</keyword>
<keyword id="KW-0819">tRNA processing</keyword>
<keyword id="KW-0820">tRNA-binding</keyword>
<evidence type="ECO:0000255" key="1">
    <source>
        <dbReference type="HAMAP-Rule" id="MF_00144"/>
    </source>
</evidence>
<evidence type="ECO:0000305" key="2"/>
<comment type="function">
    <text evidence="1">Catalyzes the 2-thiolation of uridine at the wobble position (U34) of tRNA, leading to the formation of s(2)U34.</text>
</comment>
<comment type="catalytic activity">
    <reaction evidence="1">
        <text>S-sulfanyl-L-cysteinyl-[protein] + uridine(34) in tRNA + AH2 + ATP = 2-thiouridine(34) in tRNA + L-cysteinyl-[protein] + A + AMP + diphosphate + H(+)</text>
        <dbReference type="Rhea" id="RHEA:47032"/>
        <dbReference type="Rhea" id="RHEA-COMP:10131"/>
        <dbReference type="Rhea" id="RHEA-COMP:11726"/>
        <dbReference type="Rhea" id="RHEA-COMP:11727"/>
        <dbReference type="Rhea" id="RHEA-COMP:11728"/>
        <dbReference type="ChEBI" id="CHEBI:13193"/>
        <dbReference type="ChEBI" id="CHEBI:15378"/>
        <dbReference type="ChEBI" id="CHEBI:17499"/>
        <dbReference type="ChEBI" id="CHEBI:29950"/>
        <dbReference type="ChEBI" id="CHEBI:30616"/>
        <dbReference type="ChEBI" id="CHEBI:33019"/>
        <dbReference type="ChEBI" id="CHEBI:61963"/>
        <dbReference type="ChEBI" id="CHEBI:65315"/>
        <dbReference type="ChEBI" id="CHEBI:87170"/>
        <dbReference type="ChEBI" id="CHEBI:456215"/>
        <dbReference type="EC" id="2.8.1.13"/>
    </reaction>
</comment>
<comment type="subcellular location">
    <subcellularLocation>
        <location evidence="1">Cytoplasm</location>
    </subcellularLocation>
</comment>
<comment type="similarity">
    <text evidence="1">Belongs to the MnmA/TRMU family.</text>
</comment>
<comment type="sequence caution" evidence="2">
    <conflict type="erroneous initiation">
        <sequence resource="EMBL-CDS" id="CAM05360"/>
    </conflict>
</comment>
<reference key="1">
    <citation type="journal article" date="2007" name="Nat. Biotechnol.">
        <title>Complete genome sequence of the erythromycin-producing bacterium Saccharopolyspora erythraea NRRL23338.</title>
        <authorList>
            <person name="Oliynyk M."/>
            <person name="Samborskyy M."/>
            <person name="Lester J.B."/>
            <person name="Mironenko T."/>
            <person name="Scott N."/>
            <person name="Dickens S."/>
            <person name="Haydock S.F."/>
            <person name="Leadlay P.F."/>
        </authorList>
    </citation>
    <scope>NUCLEOTIDE SEQUENCE [LARGE SCALE GENOMIC DNA]</scope>
    <source>
        <strain>ATCC 11635 / DSM 40517 / JCM 4748 / NBRC 13426 / NCIMB 8594 / NRRL 2338</strain>
    </source>
</reference>
<feature type="chain" id="PRO_0000349783" description="tRNA-specific 2-thiouridylase MnmA">
    <location>
        <begin position="1"/>
        <end position="362"/>
    </location>
</feature>
<feature type="region of interest" description="Interaction with tRNA" evidence="1">
    <location>
        <begin position="147"/>
        <end position="149"/>
    </location>
</feature>
<feature type="active site" description="Nucleophile" evidence="1">
    <location>
        <position position="101"/>
    </location>
</feature>
<feature type="active site" description="Cysteine persulfide intermediate" evidence="1">
    <location>
        <position position="197"/>
    </location>
</feature>
<feature type="binding site" evidence="1">
    <location>
        <begin position="6"/>
        <end position="13"/>
    </location>
    <ligand>
        <name>ATP</name>
        <dbReference type="ChEBI" id="CHEBI:30616"/>
    </ligand>
</feature>
<feature type="binding site" evidence="1">
    <location>
        <position position="32"/>
    </location>
    <ligand>
        <name>ATP</name>
        <dbReference type="ChEBI" id="CHEBI:30616"/>
    </ligand>
</feature>
<feature type="binding site" evidence="1">
    <location>
        <position position="125"/>
    </location>
    <ligand>
        <name>ATP</name>
        <dbReference type="ChEBI" id="CHEBI:30616"/>
    </ligand>
</feature>
<feature type="site" description="Interaction with tRNA" evidence="1">
    <location>
        <position position="126"/>
    </location>
</feature>
<feature type="site" description="Interaction with tRNA" evidence="1">
    <location>
        <position position="338"/>
    </location>
</feature>
<feature type="disulfide bond" description="Alternate" evidence="1">
    <location>
        <begin position="101"/>
        <end position="197"/>
    </location>
</feature>
<proteinExistence type="inferred from homology"/>
<dbReference type="EC" id="2.8.1.13" evidence="1"/>
<dbReference type="EMBL" id="AM420293">
    <property type="protein sequence ID" value="CAM05360.1"/>
    <property type="status" value="ALT_INIT"/>
    <property type="molecule type" value="Genomic_DNA"/>
</dbReference>
<dbReference type="RefSeq" id="WP_029621462.1">
    <property type="nucleotide sequence ID" value="NC_009142.1"/>
</dbReference>
<dbReference type="SMR" id="A4FMT5"/>
<dbReference type="STRING" id="405948.SACE_6187"/>
<dbReference type="KEGG" id="sen:SACE_6187"/>
<dbReference type="eggNOG" id="COG0482">
    <property type="taxonomic scope" value="Bacteria"/>
</dbReference>
<dbReference type="HOGENOM" id="CLU_035188_0_2_11"/>
<dbReference type="OrthoDB" id="9800696at2"/>
<dbReference type="Proteomes" id="UP000006728">
    <property type="component" value="Chromosome"/>
</dbReference>
<dbReference type="GO" id="GO:0005737">
    <property type="term" value="C:cytoplasm"/>
    <property type="evidence" value="ECO:0007669"/>
    <property type="project" value="UniProtKB-SubCell"/>
</dbReference>
<dbReference type="GO" id="GO:0005524">
    <property type="term" value="F:ATP binding"/>
    <property type="evidence" value="ECO:0007669"/>
    <property type="project" value="UniProtKB-KW"/>
</dbReference>
<dbReference type="GO" id="GO:0000049">
    <property type="term" value="F:tRNA binding"/>
    <property type="evidence" value="ECO:0007669"/>
    <property type="project" value="UniProtKB-KW"/>
</dbReference>
<dbReference type="GO" id="GO:0103016">
    <property type="term" value="F:tRNA-uridine 2-sulfurtransferase activity"/>
    <property type="evidence" value="ECO:0007669"/>
    <property type="project" value="UniProtKB-EC"/>
</dbReference>
<dbReference type="GO" id="GO:0002143">
    <property type="term" value="P:tRNA wobble position uridine thiolation"/>
    <property type="evidence" value="ECO:0007669"/>
    <property type="project" value="TreeGrafter"/>
</dbReference>
<dbReference type="CDD" id="cd01998">
    <property type="entry name" value="MnmA_TRMU-like"/>
    <property type="match status" value="1"/>
</dbReference>
<dbReference type="FunFam" id="3.40.50.620:FF:000057">
    <property type="entry name" value="tRNA-specific 2-thiouridylase MnmA"/>
    <property type="match status" value="1"/>
</dbReference>
<dbReference type="Gene3D" id="2.30.30.280">
    <property type="entry name" value="Adenine nucleotide alpha hydrolases-like domains"/>
    <property type="match status" value="1"/>
</dbReference>
<dbReference type="Gene3D" id="3.40.50.620">
    <property type="entry name" value="HUPs"/>
    <property type="match status" value="1"/>
</dbReference>
<dbReference type="Gene3D" id="2.40.30.10">
    <property type="entry name" value="Translation factors"/>
    <property type="match status" value="1"/>
</dbReference>
<dbReference type="HAMAP" id="MF_00144">
    <property type="entry name" value="tRNA_thiouridyl_MnmA"/>
    <property type="match status" value="1"/>
</dbReference>
<dbReference type="InterPro" id="IPR004506">
    <property type="entry name" value="MnmA-like"/>
</dbReference>
<dbReference type="InterPro" id="IPR046885">
    <property type="entry name" value="MnmA-like_C"/>
</dbReference>
<dbReference type="InterPro" id="IPR046884">
    <property type="entry name" value="MnmA-like_central"/>
</dbReference>
<dbReference type="InterPro" id="IPR023382">
    <property type="entry name" value="MnmA-like_central_sf"/>
</dbReference>
<dbReference type="InterPro" id="IPR014729">
    <property type="entry name" value="Rossmann-like_a/b/a_fold"/>
</dbReference>
<dbReference type="NCBIfam" id="NF001138">
    <property type="entry name" value="PRK00143.1"/>
    <property type="match status" value="1"/>
</dbReference>
<dbReference type="NCBIfam" id="TIGR00420">
    <property type="entry name" value="trmU"/>
    <property type="match status" value="1"/>
</dbReference>
<dbReference type="PANTHER" id="PTHR11933:SF5">
    <property type="entry name" value="MITOCHONDRIAL TRNA-SPECIFIC 2-THIOURIDYLASE 1"/>
    <property type="match status" value="1"/>
</dbReference>
<dbReference type="PANTHER" id="PTHR11933">
    <property type="entry name" value="TRNA 5-METHYLAMINOMETHYL-2-THIOURIDYLATE -METHYLTRANSFERASE"/>
    <property type="match status" value="1"/>
</dbReference>
<dbReference type="Pfam" id="PF03054">
    <property type="entry name" value="tRNA_Me_trans"/>
    <property type="match status" value="1"/>
</dbReference>
<dbReference type="Pfam" id="PF20258">
    <property type="entry name" value="tRNA_Me_trans_C"/>
    <property type="match status" value="1"/>
</dbReference>
<dbReference type="Pfam" id="PF20259">
    <property type="entry name" value="tRNA_Me_trans_M"/>
    <property type="match status" value="1"/>
</dbReference>
<dbReference type="SUPFAM" id="SSF52402">
    <property type="entry name" value="Adenine nucleotide alpha hydrolases-like"/>
    <property type="match status" value="1"/>
</dbReference>